<gene>
    <name type="primary">cat</name>
</gene>
<organism>
    <name type="scientific">Staphylococcus intermedius</name>
    <dbReference type="NCBI Taxonomy" id="1285"/>
    <lineage>
        <taxon>Bacteria</taxon>
        <taxon>Bacillati</taxon>
        <taxon>Bacillota</taxon>
        <taxon>Bacilli</taxon>
        <taxon>Bacillales</taxon>
        <taxon>Staphylococcaceae</taxon>
        <taxon>Staphylococcus</taxon>
        <taxon>Staphylococcus intermedius group</taxon>
    </lineage>
</organism>
<dbReference type="EC" id="2.3.1.28"/>
<dbReference type="EMBL" id="M64281">
    <property type="protein sequence ID" value="AAA26615.1"/>
    <property type="molecule type" value="Genomic_DNA"/>
</dbReference>
<dbReference type="PIR" id="A49758">
    <property type="entry name" value="A49758"/>
</dbReference>
<dbReference type="RefSeq" id="WP_063843211.1">
    <property type="nucleotide sequence ID" value="NG_047572.1"/>
</dbReference>
<dbReference type="SMR" id="P25309"/>
<dbReference type="CARD" id="ARO:3004457">
    <property type="molecule name" value="Sint_ACT_CHL"/>
    <property type="mechanism identifier" value="ARO:0001004"/>
    <property type="mechanism name" value="antibiotic inactivation"/>
</dbReference>
<dbReference type="GO" id="GO:0008811">
    <property type="term" value="F:chloramphenicol O-acetyltransferase activity"/>
    <property type="evidence" value="ECO:0007669"/>
    <property type="project" value="UniProtKB-EC"/>
</dbReference>
<dbReference type="GO" id="GO:0046677">
    <property type="term" value="P:response to antibiotic"/>
    <property type="evidence" value="ECO:0007669"/>
    <property type="project" value="UniProtKB-KW"/>
</dbReference>
<dbReference type="Gene3D" id="3.30.559.10">
    <property type="entry name" value="Chloramphenicol acetyltransferase-like domain"/>
    <property type="match status" value="1"/>
</dbReference>
<dbReference type="InterPro" id="IPR023213">
    <property type="entry name" value="CAT-like_dom_sf"/>
</dbReference>
<dbReference type="InterPro" id="IPR018372">
    <property type="entry name" value="Chloramphenicol_AcTrfase_AS"/>
</dbReference>
<dbReference type="InterPro" id="IPR001707">
    <property type="entry name" value="Cmp_AcTrfase"/>
</dbReference>
<dbReference type="NCBIfam" id="NF000491">
    <property type="entry name" value="chloram_CatA"/>
    <property type="match status" value="1"/>
</dbReference>
<dbReference type="PANTHER" id="PTHR38474:SF2">
    <property type="entry name" value="CHLORAMPHENICOL ACETYLTRANSFERASE"/>
    <property type="match status" value="1"/>
</dbReference>
<dbReference type="PANTHER" id="PTHR38474">
    <property type="entry name" value="SLR0299 PROTEIN"/>
    <property type="match status" value="1"/>
</dbReference>
<dbReference type="Pfam" id="PF00302">
    <property type="entry name" value="CAT"/>
    <property type="match status" value="1"/>
</dbReference>
<dbReference type="PIRSF" id="PIRSF000440">
    <property type="entry name" value="CAT"/>
    <property type="match status" value="1"/>
</dbReference>
<dbReference type="SMART" id="SM01059">
    <property type="entry name" value="CAT"/>
    <property type="match status" value="1"/>
</dbReference>
<dbReference type="SUPFAM" id="SSF52777">
    <property type="entry name" value="CoA-dependent acyltransferases"/>
    <property type="match status" value="1"/>
</dbReference>
<dbReference type="PROSITE" id="PS00100">
    <property type="entry name" value="CAT"/>
    <property type="match status" value="1"/>
</dbReference>
<protein>
    <recommendedName>
        <fullName>Chloramphenicol acetyltransferase</fullName>
        <shortName>CAT</shortName>
        <ecNumber>2.3.1.28</ecNumber>
    </recommendedName>
</protein>
<feature type="chain" id="PRO_0000165869" description="Chloramphenicol acetyltransferase">
    <location>
        <begin position="1"/>
        <end position="215"/>
    </location>
</feature>
<feature type="active site" description="Proton acceptor" evidence="1">
    <location>
        <position position="189"/>
    </location>
</feature>
<sequence length="215" mass="25725">MTFNIIKLENWDRKEYFEHYFNQQTTYSITKEIDITLFKDMIKKKGYEIYPSLIYAIMEVVNKNKVFRTGINSENKLGYWDKLNPLYTVFNKQTEKFTNIWTESDNNFTSFYNNYKNDLFEYKDKEEMFPKKPIPENTIPISMIPWIDFSSFNLNIGNNSSFLLPIITIGKFYSENNKIYIPVALQLHHAVCDGYHASLFINEFQDIIKKVDDWI</sequence>
<proteinExistence type="inferred from homology"/>
<name>CAT_STAIN</name>
<evidence type="ECO:0000255" key="1">
    <source>
        <dbReference type="PROSITE-ProRule" id="PRU10021"/>
    </source>
</evidence>
<evidence type="ECO:0000305" key="2"/>
<geneLocation type="plasmid">
    <name>pSCS1</name>
</geneLocation>
<comment type="function">
    <text>This enzyme is an effector of chloramphenicol resistance in bacteria.</text>
</comment>
<comment type="catalytic activity">
    <reaction evidence="1">
        <text>chloramphenicol + acetyl-CoA = chloramphenicol 3-acetate + CoA</text>
        <dbReference type="Rhea" id="RHEA:18421"/>
        <dbReference type="ChEBI" id="CHEBI:16730"/>
        <dbReference type="ChEBI" id="CHEBI:17698"/>
        <dbReference type="ChEBI" id="CHEBI:57287"/>
        <dbReference type="ChEBI" id="CHEBI:57288"/>
        <dbReference type="EC" id="2.3.1.28"/>
    </reaction>
</comment>
<comment type="subunit">
    <text>Homotrimer.</text>
</comment>
<comment type="similarity">
    <text evidence="2">Belongs to the chloramphenicol acetyltransferase family.</text>
</comment>
<keyword id="KW-0012">Acyltransferase</keyword>
<keyword id="KW-0046">Antibiotic resistance</keyword>
<keyword id="KW-0614">Plasmid</keyword>
<keyword id="KW-0808">Transferase</keyword>
<accession>P25309</accession>
<reference key="1">
    <citation type="journal article" date="1991" name="J. Gen. Microbiol.">
        <title>Cloning and sequence analysis of a plasmid-encoded chloramphenicol acetyltransferase gene from Staphylococcus intermedius.</title>
        <authorList>
            <person name="Schwarz S."/>
            <person name="Spies U."/>
            <person name="Cardoso M."/>
        </authorList>
    </citation>
    <scope>NUCLEOTIDE SEQUENCE [GENOMIC DNA]</scope>
</reference>